<dbReference type="EMBL" id="AL033503">
    <property type="protein sequence ID" value="CAA22017.1"/>
    <property type="molecule type" value="Genomic_DNA"/>
</dbReference>
<dbReference type="PIR" id="T18246">
    <property type="entry name" value="T18246"/>
</dbReference>
<dbReference type="SMR" id="O94065"/>
<dbReference type="VEuPathDB" id="FungiDB:CAWG_01530"/>
<dbReference type="VEuPathDB" id="FungiDB:CR_01790C_A"/>
<dbReference type="GO" id="GO:1990391">
    <property type="term" value="C:DNA repair complex"/>
    <property type="evidence" value="ECO:0007669"/>
    <property type="project" value="EnsemblFungi"/>
</dbReference>
<dbReference type="GO" id="GO:0062128">
    <property type="term" value="C:MutSgamma complex"/>
    <property type="evidence" value="ECO:0007669"/>
    <property type="project" value="EnsemblFungi"/>
</dbReference>
<dbReference type="GO" id="GO:0000228">
    <property type="term" value="C:nuclear chromosome"/>
    <property type="evidence" value="ECO:0007669"/>
    <property type="project" value="EnsemblFungi"/>
</dbReference>
<dbReference type="GO" id="GO:0005524">
    <property type="term" value="F:ATP binding"/>
    <property type="evidence" value="ECO:0007669"/>
    <property type="project" value="UniProtKB-KW"/>
</dbReference>
<dbReference type="GO" id="GO:0140664">
    <property type="term" value="F:ATP-dependent DNA damage sensor activity"/>
    <property type="evidence" value="ECO:0007669"/>
    <property type="project" value="InterPro"/>
</dbReference>
<dbReference type="GO" id="GO:0062037">
    <property type="term" value="F:D-loop DNA binding"/>
    <property type="evidence" value="ECO:0007669"/>
    <property type="project" value="EnsemblFungi"/>
</dbReference>
<dbReference type="GO" id="GO:0000400">
    <property type="term" value="F:four-way junction DNA binding"/>
    <property type="evidence" value="ECO:0007669"/>
    <property type="project" value="EnsemblFungi"/>
</dbReference>
<dbReference type="GO" id="GO:0030983">
    <property type="term" value="F:mismatched DNA binding"/>
    <property type="evidence" value="ECO:0007669"/>
    <property type="project" value="InterPro"/>
</dbReference>
<dbReference type="GO" id="GO:0000403">
    <property type="term" value="F:Y-form DNA binding"/>
    <property type="evidence" value="ECO:0007669"/>
    <property type="project" value="EnsemblFungi"/>
</dbReference>
<dbReference type="GO" id="GO:0006298">
    <property type="term" value="P:mismatch repair"/>
    <property type="evidence" value="ECO:0007669"/>
    <property type="project" value="InterPro"/>
</dbReference>
<dbReference type="GO" id="GO:0007131">
    <property type="term" value="P:reciprocal meiotic recombination"/>
    <property type="evidence" value="ECO:0007669"/>
    <property type="project" value="EnsemblFungi"/>
</dbReference>
<dbReference type="CDD" id="cd03282">
    <property type="entry name" value="ABC_MSH4_euk"/>
    <property type="match status" value="1"/>
</dbReference>
<dbReference type="FunFam" id="3.40.50.300:FF:004070">
    <property type="entry name" value="MutS protein homolog 4"/>
    <property type="match status" value="1"/>
</dbReference>
<dbReference type="Gene3D" id="1.10.1420.10">
    <property type="match status" value="2"/>
</dbReference>
<dbReference type="Gene3D" id="3.30.420.110">
    <property type="entry name" value="MutS, connector domain"/>
    <property type="match status" value="1"/>
</dbReference>
<dbReference type="Gene3D" id="3.40.50.300">
    <property type="entry name" value="P-loop containing nucleotide triphosphate hydrolases"/>
    <property type="match status" value="1"/>
</dbReference>
<dbReference type="InterPro" id="IPR011184">
    <property type="entry name" value="DNA_mismatch_repair_Msh2"/>
</dbReference>
<dbReference type="InterPro" id="IPR000432">
    <property type="entry name" value="DNA_mismatch_repair_MutS_C"/>
</dbReference>
<dbReference type="InterPro" id="IPR007861">
    <property type="entry name" value="DNA_mismatch_repair_MutS_clamp"/>
</dbReference>
<dbReference type="InterPro" id="IPR007696">
    <property type="entry name" value="DNA_mismatch_repair_MutS_core"/>
</dbReference>
<dbReference type="InterPro" id="IPR036187">
    <property type="entry name" value="DNA_mismatch_repair_MutS_sf"/>
</dbReference>
<dbReference type="InterPro" id="IPR007860">
    <property type="entry name" value="DNA_mmatch_repair_MutS_con_dom"/>
</dbReference>
<dbReference type="InterPro" id="IPR045076">
    <property type="entry name" value="MutS"/>
</dbReference>
<dbReference type="InterPro" id="IPR036678">
    <property type="entry name" value="MutS_con_dom_sf"/>
</dbReference>
<dbReference type="InterPro" id="IPR027417">
    <property type="entry name" value="P-loop_NTPase"/>
</dbReference>
<dbReference type="PANTHER" id="PTHR11361">
    <property type="entry name" value="DNA MISMATCH REPAIR PROTEIN MUTS FAMILY MEMBER"/>
    <property type="match status" value="1"/>
</dbReference>
<dbReference type="PANTHER" id="PTHR11361:SF21">
    <property type="entry name" value="MUTS PROTEIN HOMOLOG 4"/>
    <property type="match status" value="1"/>
</dbReference>
<dbReference type="Pfam" id="PF05188">
    <property type="entry name" value="MutS_II"/>
    <property type="match status" value="1"/>
</dbReference>
<dbReference type="Pfam" id="PF05192">
    <property type="entry name" value="MutS_III"/>
    <property type="match status" value="1"/>
</dbReference>
<dbReference type="Pfam" id="PF05190">
    <property type="entry name" value="MutS_IV"/>
    <property type="match status" value="1"/>
</dbReference>
<dbReference type="Pfam" id="PF00488">
    <property type="entry name" value="MutS_V"/>
    <property type="match status" value="1"/>
</dbReference>
<dbReference type="PIRSF" id="PIRSF005813">
    <property type="entry name" value="MSH2"/>
    <property type="match status" value="1"/>
</dbReference>
<dbReference type="SMART" id="SM00534">
    <property type="entry name" value="MUTSac"/>
    <property type="match status" value="1"/>
</dbReference>
<dbReference type="SMART" id="SM00533">
    <property type="entry name" value="MUTSd"/>
    <property type="match status" value="1"/>
</dbReference>
<dbReference type="SUPFAM" id="SSF53150">
    <property type="entry name" value="DNA repair protein MutS, domain II"/>
    <property type="match status" value="1"/>
</dbReference>
<dbReference type="SUPFAM" id="SSF48334">
    <property type="entry name" value="DNA repair protein MutS, domain III"/>
    <property type="match status" value="1"/>
</dbReference>
<dbReference type="SUPFAM" id="SSF52540">
    <property type="entry name" value="P-loop containing nucleoside triphosphate hydrolases"/>
    <property type="match status" value="1"/>
</dbReference>
<dbReference type="PROSITE" id="PS00486">
    <property type="entry name" value="DNA_MISMATCH_REPAIR_2"/>
    <property type="match status" value="1"/>
</dbReference>
<evidence type="ECO:0000250" key="1"/>
<evidence type="ECO:0000255" key="2"/>
<evidence type="ECO:0000305" key="3"/>
<proteinExistence type="inferred from homology"/>
<gene>
    <name type="primary">MSH4</name>
    <name type="ORF">Ca49C4.07c</name>
</gene>
<sequence length="803" mass="90800">MALASQLSVTDDSAYGFITTNAEIVSKKRKLAQNDDRFEVVMSVYSPKADSMDVGVSVLKLKTLELTLMSFCDSSTFVRTVNQIQVYEPTSIILPEAQSHSQIEKLKYIIHSNISDKVRERFMKAKVFNAFDGMNSLKLYTDINESTLGQVISNRKLSLAAANACIDYCVSTKMFRVTNKIRLKYCMCENTMLIDTCTVRDLELVDSLSETGTTLYSFLNCCLTKMGMRILRTSILQPSTHENSIILRSESLQELINDEDALISIRSSLKHTCDLEKVFSTFLEPRGLLSQEQEINNIILLKTVLQNTFVIRKSIQNVSSHLLVQVKQILEHENVQHLLAIINEYIRNDCQWANNSTELANQRANAVKSGVNGLLDVSRRIRETLLEEVSELVAKLSEELEIFMEYRFEISRGFFIKIKGNNTDINSLPEVLINRVKKRKTIECTTIELMKQSSRYNDIVSEITTLNSTIIHDMYTSINSYTPILLMVSEAIGTLDLLCSFAYFTSLQKDSYTCPEFAKEVTIMRSLHPILGGNNSNFVANNYSCNHELSRIHVITGANMSGKSVYLRQIAYLVIMAQMGCFVPAEYARMRIFNSLYSRISSDNVDINASSFSKEMSETAVILNDSDGDSLILIDELGRGSSLTDGFSICLAILEDLICKEATVITTTHFRDIAQVLANKSCVVTAHMQTVETNGQLEMKYNLVLGRNDIVGYGIRFAEVSNLLPQELIEDSKVVANILRSRKPVHGDKELKLLSRRRKLVLELYFALNYISKLNCDMNYKMQLLQTLQSKFVEEINITPNTE</sequence>
<keyword id="KW-0067">ATP-binding</keyword>
<keyword id="KW-0238">DNA-binding</keyword>
<keyword id="KW-0469">Meiosis</keyword>
<keyword id="KW-0547">Nucleotide-binding</keyword>
<name>MSH4_CANAX</name>
<organism>
    <name type="scientific">Candida albicans</name>
    <name type="common">Yeast</name>
    <dbReference type="NCBI Taxonomy" id="5476"/>
    <lineage>
        <taxon>Eukaryota</taxon>
        <taxon>Fungi</taxon>
        <taxon>Dikarya</taxon>
        <taxon>Ascomycota</taxon>
        <taxon>Saccharomycotina</taxon>
        <taxon>Pichiomycetes</taxon>
        <taxon>Debaryomycetaceae</taxon>
        <taxon>Candida/Lodderomyces clade</taxon>
        <taxon>Candida</taxon>
    </lineage>
</organism>
<reference key="1">
    <citation type="submission" date="1998-11" db="EMBL/GenBank/DDBJ databases">
        <title>Candida albicans strain 1161 genome pilot sequencing project.</title>
        <authorList>
            <person name="Murphy L."/>
            <person name="Harris D."/>
            <person name="Barrell B.G."/>
            <person name="Rajandream M.A."/>
        </authorList>
    </citation>
    <scope>NUCLEOTIDE SEQUENCE [LARGE SCALE GENOMIC DNA]</scope>
    <source>
        <strain>1161</strain>
    </source>
</reference>
<feature type="chain" id="PRO_0000115200" description="MutS protein homolog 4">
    <location>
        <begin position="1"/>
        <end position="803"/>
    </location>
</feature>
<feature type="binding site" evidence="2">
    <location>
        <begin position="557"/>
        <end position="564"/>
    </location>
    <ligand>
        <name>ATP</name>
        <dbReference type="ChEBI" id="CHEBI:30616"/>
    </ligand>
</feature>
<accession>O94065</accession>
<protein>
    <recommendedName>
        <fullName>MutS protein homolog 4</fullName>
    </recommendedName>
</protein>
<comment type="function">
    <text evidence="1">Involved in meiotic recombination. Facilitate crossovers between homologs during meiosis (By similarity).</text>
</comment>
<comment type="subunit">
    <text evidence="1">Heterooligomer of MSH4 and MSH5.</text>
</comment>
<comment type="similarity">
    <text evidence="3">Belongs to the DNA mismatch repair MutS family.</text>
</comment>